<accession>A4JF27</accession>
<feature type="chain" id="PRO_1000015365" description="Large-conductance mechanosensitive channel">
    <location>
        <begin position="1"/>
        <end position="143"/>
    </location>
</feature>
<feature type="transmembrane region" description="Helical" evidence="1">
    <location>
        <begin position="10"/>
        <end position="30"/>
    </location>
</feature>
<feature type="transmembrane region" description="Helical" evidence="1">
    <location>
        <begin position="89"/>
        <end position="109"/>
    </location>
</feature>
<reference key="1">
    <citation type="submission" date="2007-03" db="EMBL/GenBank/DDBJ databases">
        <title>Complete sequence of chromosome 1 of Burkholderia vietnamiensis G4.</title>
        <authorList>
            <consortium name="US DOE Joint Genome Institute"/>
            <person name="Copeland A."/>
            <person name="Lucas S."/>
            <person name="Lapidus A."/>
            <person name="Barry K."/>
            <person name="Detter J.C."/>
            <person name="Glavina del Rio T."/>
            <person name="Hammon N."/>
            <person name="Israni S."/>
            <person name="Dalin E."/>
            <person name="Tice H."/>
            <person name="Pitluck S."/>
            <person name="Chain P."/>
            <person name="Malfatti S."/>
            <person name="Shin M."/>
            <person name="Vergez L."/>
            <person name="Schmutz J."/>
            <person name="Larimer F."/>
            <person name="Land M."/>
            <person name="Hauser L."/>
            <person name="Kyrpides N."/>
            <person name="Tiedje J."/>
            <person name="Richardson P."/>
        </authorList>
    </citation>
    <scope>NUCLEOTIDE SEQUENCE [LARGE SCALE GENOMIC DNA]</scope>
    <source>
        <strain>G4 / LMG 22486</strain>
    </source>
</reference>
<name>MSCL_BURVG</name>
<evidence type="ECO:0000255" key="1">
    <source>
        <dbReference type="HAMAP-Rule" id="MF_00115"/>
    </source>
</evidence>
<comment type="function">
    <text evidence="1">Channel that opens in response to stretch forces in the membrane lipid bilayer. May participate in the regulation of osmotic pressure changes within the cell.</text>
</comment>
<comment type="subunit">
    <text evidence="1">Homopentamer.</text>
</comment>
<comment type="subcellular location">
    <subcellularLocation>
        <location evidence="1">Cell inner membrane</location>
        <topology evidence="1">Multi-pass membrane protein</topology>
    </subcellularLocation>
</comment>
<comment type="similarity">
    <text evidence="1">Belongs to the MscL family.</text>
</comment>
<sequence>MSIIKEFKEFAVKGNVMDLAVGVIIGGAFSKIVDSVVKDLIMPVIGVLTGGLDFSNKFILLGTIPPSFKGNPDSFKDLQAAGVAAFGYGSFITVAINFVILAFIIFLMVKFINKLRKPAEAAPAATPEDVLLLREIRDSLKQR</sequence>
<keyword id="KW-0997">Cell inner membrane</keyword>
<keyword id="KW-1003">Cell membrane</keyword>
<keyword id="KW-0407">Ion channel</keyword>
<keyword id="KW-0406">Ion transport</keyword>
<keyword id="KW-0472">Membrane</keyword>
<keyword id="KW-0812">Transmembrane</keyword>
<keyword id="KW-1133">Transmembrane helix</keyword>
<keyword id="KW-0813">Transport</keyword>
<gene>
    <name evidence="1" type="primary">mscL</name>
    <name type="ordered locus">Bcep1808_1877</name>
</gene>
<proteinExistence type="inferred from homology"/>
<dbReference type="EMBL" id="CP000614">
    <property type="protein sequence ID" value="ABO54880.1"/>
    <property type="molecule type" value="Genomic_DNA"/>
</dbReference>
<dbReference type="SMR" id="A4JF27"/>
<dbReference type="KEGG" id="bvi:Bcep1808_1877"/>
<dbReference type="eggNOG" id="COG1970">
    <property type="taxonomic scope" value="Bacteria"/>
</dbReference>
<dbReference type="HOGENOM" id="CLU_095787_0_1_4"/>
<dbReference type="Proteomes" id="UP000002287">
    <property type="component" value="Chromosome 1"/>
</dbReference>
<dbReference type="GO" id="GO:0005886">
    <property type="term" value="C:plasma membrane"/>
    <property type="evidence" value="ECO:0007669"/>
    <property type="project" value="UniProtKB-SubCell"/>
</dbReference>
<dbReference type="GO" id="GO:0008381">
    <property type="term" value="F:mechanosensitive monoatomic ion channel activity"/>
    <property type="evidence" value="ECO:0007669"/>
    <property type="project" value="UniProtKB-UniRule"/>
</dbReference>
<dbReference type="Gene3D" id="1.10.1200.120">
    <property type="entry name" value="Large-conductance mechanosensitive channel, MscL, domain 1"/>
    <property type="match status" value="1"/>
</dbReference>
<dbReference type="HAMAP" id="MF_00115">
    <property type="entry name" value="MscL"/>
    <property type="match status" value="1"/>
</dbReference>
<dbReference type="InterPro" id="IPR019823">
    <property type="entry name" value="Mechanosensitive_channel_CS"/>
</dbReference>
<dbReference type="InterPro" id="IPR001185">
    <property type="entry name" value="MS_channel"/>
</dbReference>
<dbReference type="InterPro" id="IPR037673">
    <property type="entry name" value="MSC/AndL"/>
</dbReference>
<dbReference type="InterPro" id="IPR036019">
    <property type="entry name" value="MscL_channel"/>
</dbReference>
<dbReference type="NCBIfam" id="TIGR00220">
    <property type="entry name" value="mscL"/>
    <property type="match status" value="1"/>
</dbReference>
<dbReference type="NCBIfam" id="NF001843">
    <property type="entry name" value="PRK00567.1-4"/>
    <property type="match status" value="1"/>
</dbReference>
<dbReference type="NCBIfam" id="NF010557">
    <property type="entry name" value="PRK13952.1"/>
    <property type="match status" value="1"/>
</dbReference>
<dbReference type="PANTHER" id="PTHR30266:SF2">
    <property type="entry name" value="LARGE-CONDUCTANCE MECHANOSENSITIVE CHANNEL"/>
    <property type="match status" value="1"/>
</dbReference>
<dbReference type="PANTHER" id="PTHR30266">
    <property type="entry name" value="MECHANOSENSITIVE CHANNEL MSCL"/>
    <property type="match status" value="1"/>
</dbReference>
<dbReference type="Pfam" id="PF01741">
    <property type="entry name" value="MscL"/>
    <property type="match status" value="1"/>
</dbReference>
<dbReference type="PRINTS" id="PR01264">
    <property type="entry name" value="MECHCHANNEL"/>
</dbReference>
<dbReference type="SUPFAM" id="SSF81330">
    <property type="entry name" value="Gated mechanosensitive channel"/>
    <property type="match status" value="1"/>
</dbReference>
<dbReference type="PROSITE" id="PS01327">
    <property type="entry name" value="MSCL"/>
    <property type="match status" value="1"/>
</dbReference>
<organism>
    <name type="scientific">Burkholderia vietnamiensis (strain G4 / LMG 22486)</name>
    <name type="common">Burkholderia cepacia (strain R1808)</name>
    <dbReference type="NCBI Taxonomy" id="269482"/>
    <lineage>
        <taxon>Bacteria</taxon>
        <taxon>Pseudomonadati</taxon>
        <taxon>Pseudomonadota</taxon>
        <taxon>Betaproteobacteria</taxon>
        <taxon>Burkholderiales</taxon>
        <taxon>Burkholderiaceae</taxon>
        <taxon>Burkholderia</taxon>
        <taxon>Burkholderia cepacia complex</taxon>
    </lineage>
</organism>
<protein>
    <recommendedName>
        <fullName evidence="1">Large-conductance mechanosensitive channel</fullName>
    </recommendedName>
</protein>